<name>ARNC_YERPE</name>
<comment type="function">
    <text>Catalyzes the transfer of 4-deoxy-4-formamido-L-arabinose from UDP to undecaprenyl phosphate. The modified arabinose is attached to lipid A and is required for resistance to polymyxin and cationic antimicrobial peptides.</text>
</comment>
<comment type="catalytic activity">
    <reaction evidence="1">
        <text>UDP-4-deoxy-4-formamido-beta-L-arabinose + di-trans,octa-cis-undecaprenyl phosphate = 4-deoxy-4-formamido-alpha-L-arabinopyranosyl di-trans,octa-cis-undecaprenyl phosphate + UDP</text>
        <dbReference type="Rhea" id="RHEA:27722"/>
        <dbReference type="ChEBI" id="CHEBI:58223"/>
        <dbReference type="ChEBI" id="CHEBI:58709"/>
        <dbReference type="ChEBI" id="CHEBI:58909"/>
        <dbReference type="ChEBI" id="CHEBI:60392"/>
        <dbReference type="EC" id="2.4.2.53"/>
    </reaction>
</comment>
<comment type="pathway">
    <text evidence="1">Glycolipid biosynthesis; 4-amino-4-deoxy-alpha-L-arabinose undecaprenyl phosphate biosynthesis; 4-amino-4-deoxy-alpha-L-arabinose undecaprenyl phosphate from UDP-4-deoxy-4-formamido-beta-L-arabinose and undecaprenyl phosphate: step 1/2.</text>
</comment>
<comment type="pathway">
    <text evidence="1">Bacterial outer membrane biogenesis; lipopolysaccharide biosynthesis.</text>
</comment>
<comment type="subcellular location">
    <subcellularLocation>
        <location evidence="1">Cell inner membrane</location>
        <topology evidence="1">Multi-pass membrane protein</topology>
    </subcellularLocation>
</comment>
<comment type="similarity">
    <text evidence="1">Belongs to the glycosyltransferase 2 family.</text>
</comment>
<organism>
    <name type="scientific">Yersinia pestis</name>
    <dbReference type="NCBI Taxonomy" id="632"/>
    <lineage>
        <taxon>Bacteria</taxon>
        <taxon>Pseudomonadati</taxon>
        <taxon>Pseudomonadota</taxon>
        <taxon>Gammaproteobacteria</taxon>
        <taxon>Enterobacterales</taxon>
        <taxon>Yersiniaceae</taxon>
        <taxon>Yersinia</taxon>
    </lineage>
</organism>
<reference key="1">
    <citation type="journal article" date="2001" name="Nature">
        <title>Genome sequence of Yersinia pestis, the causative agent of plague.</title>
        <authorList>
            <person name="Parkhill J."/>
            <person name="Wren B.W."/>
            <person name="Thomson N.R."/>
            <person name="Titball R.W."/>
            <person name="Holden M.T.G."/>
            <person name="Prentice M.B."/>
            <person name="Sebaihia M."/>
            <person name="James K.D."/>
            <person name="Churcher C.M."/>
            <person name="Mungall K.L."/>
            <person name="Baker S."/>
            <person name="Basham D."/>
            <person name="Bentley S.D."/>
            <person name="Brooks K."/>
            <person name="Cerdeno-Tarraga A.-M."/>
            <person name="Chillingworth T."/>
            <person name="Cronin A."/>
            <person name="Davies R.M."/>
            <person name="Davis P."/>
            <person name="Dougan G."/>
            <person name="Feltwell T."/>
            <person name="Hamlin N."/>
            <person name="Holroyd S."/>
            <person name="Jagels K."/>
            <person name="Karlyshev A.V."/>
            <person name="Leather S."/>
            <person name="Moule S."/>
            <person name="Oyston P.C.F."/>
            <person name="Quail M.A."/>
            <person name="Rutherford K.M."/>
            <person name="Simmonds M."/>
            <person name="Skelton J."/>
            <person name="Stevens K."/>
            <person name="Whitehead S."/>
            <person name="Barrell B.G."/>
        </authorList>
    </citation>
    <scope>NUCLEOTIDE SEQUENCE [LARGE SCALE GENOMIC DNA]</scope>
    <source>
        <strain>CO-92 / Biovar Orientalis</strain>
    </source>
</reference>
<reference key="2">
    <citation type="journal article" date="2002" name="J. Bacteriol.">
        <title>Genome sequence of Yersinia pestis KIM.</title>
        <authorList>
            <person name="Deng W."/>
            <person name="Burland V."/>
            <person name="Plunkett G. III"/>
            <person name="Boutin A."/>
            <person name="Mayhew G.F."/>
            <person name="Liss P."/>
            <person name="Perna N.T."/>
            <person name="Rose D.J."/>
            <person name="Mau B."/>
            <person name="Zhou S."/>
            <person name="Schwartz D.C."/>
            <person name="Fetherston J.D."/>
            <person name="Lindler L.E."/>
            <person name="Brubaker R.R."/>
            <person name="Plano G.V."/>
            <person name="Straley S.C."/>
            <person name="McDonough K.A."/>
            <person name="Nilles M.L."/>
            <person name="Matson J.S."/>
            <person name="Blattner F.R."/>
            <person name="Perry R.D."/>
        </authorList>
    </citation>
    <scope>NUCLEOTIDE SEQUENCE [LARGE SCALE GENOMIC DNA]</scope>
    <source>
        <strain>KIM10+ / Biovar Mediaevalis</strain>
    </source>
</reference>
<reference key="3">
    <citation type="journal article" date="2004" name="DNA Res.">
        <title>Complete genome sequence of Yersinia pestis strain 91001, an isolate avirulent to humans.</title>
        <authorList>
            <person name="Song Y."/>
            <person name="Tong Z."/>
            <person name="Wang J."/>
            <person name="Wang L."/>
            <person name="Guo Z."/>
            <person name="Han Y."/>
            <person name="Zhang J."/>
            <person name="Pei D."/>
            <person name="Zhou D."/>
            <person name="Qin H."/>
            <person name="Pang X."/>
            <person name="Han Y."/>
            <person name="Zhai J."/>
            <person name="Li M."/>
            <person name="Cui B."/>
            <person name="Qi Z."/>
            <person name="Jin L."/>
            <person name="Dai R."/>
            <person name="Chen F."/>
            <person name="Li S."/>
            <person name="Ye C."/>
            <person name="Du Z."/>
            <person name="Lin W."/>
            <person name="Wang J."/>
            <person name="Yu J."/>
            <person name="Yang H."/>
            <person name="Wang J."/>
            <person name="Huang P."/>
            <person name="Yang R."/>
        </authorList>
    </citation>
    <scope>NUCLEOTIDE SEQUENCE [LARGE SCALE GENOMIC DNA]</scope>
    <source>
        <strain>91001 / Biovar Mediaevalis</strain>
    </source>
</reference>
<accession>Q8ZDX7</accession>
<accession>Q0WEA4</accession>
<accession>Q74TF4</accession>
<accession>Q7CIU1</accession>
<dbReference type="EC" id="2.4.2.53" evidence="1"/>
<dbReference type="EMBL" id="AL590842">
    <property type="protein sequence ID" value="CAL21048.1"/>
    <property type="molecule type" value="Genomic_DNA"/>
</dbReference>
<dbReference type="EMBL" id="AE009952">
    <property type="protein sequence ID" value="AAM85485.1"/>
    <property type="molecule type" value="Genomic_DNA"/>
</dbReference>
<dbReference type="EMBL" id="AE017042">
    <property type="protein sequence ID" value="AAS62414.1"/>
    <property type="molecule type" value="Genomic_DNA"/>
</dbReference>
<dbReference type="PIR" id="AE0295">
    <property type="entry name" value="AE0295"/>
</dbReference>
<dbReference type="RefSeq" id="WP_002211824.1">
    <property type="nucleotide sequence ID" value="NZ_WUCM01000025.1"/>
</dbReference>
<dbReference type="RefSeq" id="YP_002347384.1">
    <property type="nucleotide sequence ID" value="NC_003143.1"/>
</dbReference>
<dbReference type="SMR" id="Q8ZDX7"/>
<dbReference type="STRING" id="214092.YPO2421"/>
<dbReference type="CAZy" id="GT2">
    <property type="family name" value="Glycosyltransferase Family 2"/>
</dbReference>
<dbReference type="PaxDb" id="214092-YPO2421"/>
<dbReference type="DNASU" id="1146865"/>
<dbReference type="EnsemblBacteria" id="AAS62414">
    <property type="protein sequence ID" value="AAS62414"/>
    <property type="gene ID" value="YP_2208"/>
</dbReference>
<dbReference type="GeneID" id="57976256"/>
<dbReference type="KEGG" id="ype:YPO2421"/>
<dbReference type="KEGG" id="ypk:y1918"/>
<dbReference type="KEGG" id="ypm:YP_2208"/>
<dbReference type="PATRIC" id="fig|214092.21.peg.2829"/>
<dbReference type="eggNOG" id="COG0463">
    <property type="taxonomic scope" value="Bacteria"/>
</dbReference>
<dbReference type="HOGENOM" id="CLU_033536_0_0_6"/>
<dbReference type="OMA" id="KFLTRPM"/>
<dbReference type="OrthoDB" id="9811884at2"/>
<dbReference type="UniPathway" id="UPA00030"/>
<dbReference type="UniPathway" id="UPA00036">
    <property type="reaction ID" value="UER00495"/>
</dbReference>
<dbReference type="Proteomes" id="UP000000815">
    <property type="component" value="Chromosome"/>
</dbReference>
<dbReference type="Proteomes" id="UP000001019">
    <property type="component" value="Chromosome"/>
</dbReference>
<dbReference type="Proteomes" id="UP000002490">
    <property type="component" value="Chromosome"/>
</dbReference>
<dbReference type="GO" id="GO:0005886">
    <property type="term" value="C:plasma membrane"/>
    <property type="evidence" value="ECO:0000318"/>
    <property type="project" value="GO_Central"/>
</dbReference>
<dbReference type="GO" id="GO:0016780">
    <property type="term" value="F:phosphotransferase activity, for other substituted phosphate groups"/>
    <property type="evidence" value="ECO:0007669"/>
    <property type="project" value="UniProtKB-UniRule"/>
</dbReference>
<dbReference type="GO" id="GO:0099621">
    <property type="term" value="F:undecaprenyl-phosphate 4-deoxy-4-formamido-L-arabinose transferase activity"/>
    <property type="evidence" value="ECO:0000318"/>
    <property type="project" value="GO_Central"/>
</dbReference>
<dbReference type="GO" id="GO:0036108">
    <property type="term" value="P:4-amino-4-deoxy-alpha-L-arabinopyranosyl undecaprenyl phosphate biosynthetic process"/>
    <property type="evidence" value="ECO:0007669"/>
    <property type="project" value="UniProtKB-UniRule"/>
</dbReference>
<dbReference type="GO" id="GO:0009245">
    <property type="term" value="P:lipid A biosynthetic process"/>
    <property type="evidence" value="ECO:0007669"/>
    <property type="project" value="UniProtKB-UniRule"/>
</dbReference>
<dbReference type="GO" id="GO:0009103">
    <property type="term" value="P:lipopolysaccharide biosynthetic process"/>
    <property type="evidence" value="ECO:0007669"/>
    <property type="project" value="UniProtKB-UniRule"/>
</dbReference>
<dbReference type="GO" id="GO:0046677">
    <property type="term" value="P:response to antibiotic"/>
    <property type="evidence" value="ECO:0007669"/>
    <property type="project" value="UniProtKB-KW"/>
</dbReference>
<dbReference type="CDD" id="cd04187">
    <property type="entry name" value="DPM1_like_bac"/>
    <property type="match status" value="1"/>
</dbReference>
<dbReference type="FunFam" id="3.90.550.10:FF:000019">
    <property type="entry name" value="Undecaprenyl-phosphate 4-deoxy-4-formamido-L-arabinose transferase"/>
    <property type="match status" value="1"/>
</dbReference>
<dbReference type="Gene3D" id="3.90.550.10">
    <property type="entry name" value="Spore Coat Polysaccharide Biosynthesis Protein SpsA, Chain A"/>
    <property type="match status" value="1"/>
</dbReference>
<dbReference type="HAMAP" id="MF_01164">
    <property type="entry name" value="ArnC_transfer"/>
    <property type="match status" value="1"/>
</dbReference>
<dbReference type="InterPro" id="IPR022857">
    <property type="entry name" value="ArnC_tfrase"/>
</dbReference>
<dbReference type="InterPro" id="IPR001173">
    <property type="entry name" value="Glyco_trans_2-like"/>
</dbReference>
<dbReference type="InterPro" id="IPR050256">
    <property type="entry name" value="Glycosyltransferase_2"/>
</dbReference>
<dbReference type="InterPro" id="IPR029044">
    <property type="entry name" value="Nucleotide-diphossugar_trans"/>
</dbReference>
<dbReference type="NCBIfam" id="NF007986">
    <property type="entry name" value="PRK10714.1"/>
    <property type="match status" value="1"/>
</dbReference>
<dbReference type="PANTHER" id="PTHR48090:SF3">
    <property type="entry name" value="UNDECAPRENYL-PHOSPHATE 4-DEOXY-4-FORMAMIDO-L-ARABINOSE TRANSFERASE"/>
    <property type="match status" value="1"/>
</dbReference>
<dbReference type="PANTHER" id="PTHR48090">
    <property type="entry name" value="UNDECAPRENYL-PHOSPHATE 4-DEOXY-4-FORMAMIDO-L-ARABINOSE TRANSFERASE-RELATED"/>
    <property type="match status" value="1"/>
</dbReference>
<dbReference type="Pfam" id="PF00535">
    <property type="entry name" value="Glycos_transf_2"/>
    <property type="match status" value="1"/>
</dbReference>
<dbReference type="SUPFAM" id="SSF53448">
    <property type="entry name" value="Nucleotide-diphospho-sugar transferases"/>
    <property type="match status" value="1"/>
</dbReference>
<protein>
    <recommendedName>
        <fullName evidence="1">Undecaprenyl-phosphate 4-deoxy-4-formamido-L-arabinose transferase</fullName>
        <ecNumber evidence="1">2.4.2.53</ecNumber>
    </recommendedName>
    <alternativeName>
        <fullName evidence="1">Undecaprenyl-phosphate Ara4FN transferase</fullName>
        <shortName evidence="1">Ara4FN transferase</shortName>
    </alternativeName>
</protein>
<feature type="chain" id="PRO_0000059206" description="Undecaprenyl-phosphate 4-deoxy-4-formamido-L-arabinose transferase">
    <location>
        <begin position="1"/>
        <end position="327"/>
    </location>
</feature>
<feature type="transmembrane region" description="Helical" evidence="1">
    <location>
        <begin position="235"/>
        <end position="255"/>
    </location>
</feature>
<feature type="transmembrane region" description="Helical" evidence="1">
    <location>
        <begin position="270"/>
        <end position="290"/>
    </location>
</feature>
<keyword id="KW-0046">Antibiotic resistance</keyword>
<keyword id="KW-0997">Cell inner membrane</keyword>
<keyword id="KW-1003">Cell membrane</keyword>
<keyword id="KW-0328">Glycosyltransferase</keyword>
<keyword id="KW-0441">Lipid A biosynthesis</keyword>
<keyword id="KW-0444">Lipid biosynthesis</keyword>
<keyword id="KW-0443">Lipid metabolism</keyword>
<keyword id="KW-0448">Lipopolysaccharide biosynthesis</keyword>
<keyword id="KW-0472">Membrane</keyword>
<keyword id="KW-1185">Reference proteome</keyword>
<keyword id="KW-0808">Transferase</keyword>
<keyword id="KW-0812">Transmembrane</keyword>
<keyword id="KW-1133">Transmembrane helix</keyword>
<evidence type="ECO:0000255" key="1">
    <source>
        <dbReference type="HAMAP-Rule" id="MF_01164"/>
    </source>
</evidence>
<sequence>MSLNEPIKKVSIVIPVYNEQESLPALIDRTTAACKLLTQAYEIILVDDGSSDNSTELLTAAANDPDSHIIAILLNRNYGQHSAIMAGFNQVSGDLIITLDADLQNPPEETPRLVHVAEEGYDVVGTVRANRQDSLFRKTASRMINMMIQRATGKSMGDYGCMLRAYRRHIVEAMLHCHERSTFIPILANTFARRTTEITVHHAEREFGNSKYSLMRLINLMYDLITCLTTTPLRLLSLVGSAIALLGFTFSVLLVALRLIFGPEWAGGGVFTLFAVLFMFIGAQFVGMGLLGEYIGRIYNDVRARPRYFVQKVVGAEQTENNQDVEK</sequence>
<gene>
    <name evidence="1" type="primary">arnC</name>
    <name type="ordered locus">YPO2421</name>
    <name type="ordered locus">y1918</name>
    <name type="ordered locus">YP_2208</name>
</gene>
<proteinExistence type="inferred from homology"/>